<keyword id="KW-0007">Acetylation</keyword>
<keyword id="KW-0067">ATP-binding</keyword>
<keyword id="KW-0963">Cytoplasm</keyword>
<keyword id="KW-0206">Cytoskeleton</keyword>
<keyword id="KW-0378">Hydrolase</keyword>
<keyword id="KW-0488">Methylation</keyword>
<keyword id="KW-0547">Nucleotide-binding</keyword>
<keyword id="KW-0558">Oxidation</keyword>
<name>ACTC_PLATR</name>
<proteinExistence type="inferred from homology"/>
<organism>
    <name type="scientific">Planorbella trivolvis</name>
    <name type="common">Marsh rams-horn</name>
    <name type="synonym">Helisoma trivolvis</name>
    <dbReference type="NCBI Taxonomy" id="283763"/>
    <lineage>
        <taxon>Eukaryota</taxon>
        <taxon>Metazoa</taxon>
        <taxon>Spiralia</taxon>
        <taxon>Lophotrochozoa</taxon>
        <taxon>Mollusca</taxon>
        <taxon>Gastropoda</taxon>
        <taxon>Heterobranchia</taxon>
        <taxon>Euthyneura</taxon>
        <taxon>Panpulmonata</taxon>
        <taxon>Hygrophila</taxon>
        <taxon>Lymnaeoidea</taxon>
        <taxon>Planorbidae</taxon>
        <taxon>Planorbella</taxon>
    </lineage>
</organism>
<comment type="function">
    <text>Actins are highly conserved proteins that are involved in various types of cell motility and are ubiquitously expressed in all eukaryotic cells.</text>
</comment>
<comment type="catalytic activity">
    <reaction evidence="6">
        <text>ATP + H2O = ADP + phosphate + H(+)</text>
        <dbReference type="Rhea" id="RHEA:13065"/>
        <dbReference type="ChEBI" id="CHEBI:15377"/>
        <dbReference type="ChEBI" id="CHEBI:15378"/>
        <dbReference type="ChEBI" id="CHEBI:30616"/>
        <dbReference type="ChEBI" id="CHEBI:43474"/>
        <dbReference type="ChEBI" id="CHEBI:456216"/>
    </reaction>
</comment>
<comment type="subcellular location">
    <subcellularLocation>
        <location>Cytoplasm</location>
        <location>Cytoskeleton</location>
    </subcellularLocation>
</comment>
<comment type="PTM">
    <text evidence="4">Oxidation of Met-45 and Met-48 by MICALs (MICAL1, MICAL2 or MICAL3) to form methionine sulfoxide promotes actin filament depolymerization. MICAL1 and MICAL2 produce the (R)-S-oxide form. The (R)-S-oxide form is reverted by MSRB1 and MSRB2, which promotes actin repolymerization.</text>
</comment>
<comment type="PTM">
    <text evidence="3">Monomethylation at Lys-85 (K85me1) regulates actin-myosin interaction and actomyosin-dependent processes. Demethylation by ALKBH4 is required for maintaining actomyosin dynamics supporting normal cleavage furrow ingression during cytokinesis and cell migration.</text>
</comment>
<comment type="similarity">
    <text evidence="7">Belongs to the actin family.</text>
</comment>
<dbReference type="EC" id="3.6.4.-" evidence="6"/>
<dbReference type="EMBL" id="AF329441">
    <property type="protein sequence ID" value="AAK68715.1"/>
    <property type="molecule type" value="Genomic_DNA"/>
</dbReference>
<dbReference type="SMR" id="Q964D9"/>
<dbReference type="GO" id="GO:0005737">
    <property type="term" value="C:cytoplasm"/>
    <property type="evidence" value="ECO:0007669"/>
    <property type="project" value="UniProtKB-KW"/>
</dbReference>
<dbReference type="GO" id="GO:0005856">
    <property type="term" value="C:cytoskeleton"/>
    <property type="evidence" value="ECO:0007669"/>
    <property type="project" value="UniProtKB-SubCell"/>
</dbReference>
<dbReference type="GO" id="GO:0005524">
    <property type="term" value="F:ATP binding"/>
    <property type="evidence" value="ECO:0007669"/>
    <property type="project" value="UniProtKB-KW"/>
</dbReference>
<dbReference type="GO" id="GO:0016787">
    <property type="term" value="F:hydrolase activity"/>
    <property type="evidence" value="ECO:0007669"/>
    <property type="project" value="UniProtKB-KW"/>
</dbReference>
<dbReference type="CDD" id="cd10224">
    <property type="entry name" value="ASKHA_NBD_actin"/>
    <property type="match status" value="1"/>
</dbReference>
<dbReference type="FunFam" id="3.30.420.40:FF:000131">
    <property type="entry name" value="Actin, alpha skeletal muscle"/>
    <property type="match status" value="1"/>
</dbReference>
<dbReference type="FunFam" id="3.30.420.40:FF:000291">
    <property type="entry name" value="Actin, alpha skeletal muscle"/>
    <property type="match status" value="1"/>
</dbReference>
<dbReference type="FunFam" id="3.90.640.10:FF:000047">
    <property type="entry name" value="Actin, alpha skeletal muscle"/>
    <property type="match status" value="1"/>
</dbReference>
<dbReference type="FunFam" id="3.30.420.40:FF:000058">
    <property type="entry name" value="Putative actin-related protein 5"/>
    <property type="match status" value="1"/>
</dbReference>
<dbReference type="Gene3D" id="3.30.420.40">
    <property type="match status" value="2"/>
</dbReference>
<dbReference type="Gene3D" id="3.90.640.10">
    <property type="entry name" value="Actin, Chain A, domain 4"/>
    <property type="match status" value="1"/>
</dbReference>
<dbReference type="InterPro" id="IPR004000">
    <property type="entry name" value="Actin"/>
</dbReference>
<dbReference type="InterPro" id="IPR020902">
    <property type="entry name" value="Actin/actin-like_CS"/>
</dbReference>
<dbReference type="InterPro" id="IPR004001">
    <property type="entry name" value="Actin_CS"/>
</dbReference>
<dbReference type="InterPro" id="IPR043129">
    <property type="entry name" value="ATPase_NBD"/>
</dbReference>
<dbReference type="PANTHER" id="PTHR11937">
    <property type="entry name" value="ACTIN"/>
    <property type="match status" value="1"/>
</dbReference>
<dbReference type="Pfam" id="PF00022">
    <property type="entry name" value="Actin"/>
    <property type="match status" value="1"/>
</dbReference>
<dbReference type="PRINTS" id="PR00190">
    <property type="entry name" value="ACTIN"/>
</dbReference>
<dbReference type="SMART" id="SM00268">
    <property type="entry name" value="ACTIN"/>
    <property type="match status" value="1"/>
</dbReference>
<dbReference type="SUPFAM" id="SSF53067">
    <property type="entry name" value="Actin-like ATPase domain"/>
    <property type="match status" value="2"/>
</dbReference>
<dbReference type="PROSITE" id="PS00406">
    <property type="entry name" value="ACTINS_1"/>
    <property type="match status" value="1"/>
</dbReference>
<dbReference type="PROSITE" id="PS00432">
    <property type="entry name" value="ACTINS_2"/>
    <property type="match status" value="1"/>
</dbReference>
<dbReference type="PROSITE" id="PS01132">
    <property type="entry name" value="ACTINS_ACT_LIKE"/>
    <property type="match status" value="1"/>
</dbReference>
<accession>Q964D9</accession>
<protein>
    <recommendedName>
        <fullName>Actin, cytoplasmic</fullName>
        <ecNumber evidence="6">3.6.4.-</ecNumber>
    </recommendedName>
    <component>
        <recommendedName>
            <fullName>Actin, cytoplasmic, intermediate form</fullName>
        </recommendedName>
    </component>
</protein>
<evidence type="ECO:0000250" key="1">
    <source>
        <dbReference type="UniProtKB" id="P62737"/>
    </source>
</evidence>
<evidence type="ECO:0000250" key="2">
    <source>
        <dbReference type="UniProtKB" id="P62739"/>
    </source>
</evidence>
<evidence type="ECO:0000250" key="3">
    <source>
        <dbReference type="UniProtKB" id="P68032"/>
    </source>
</evidence>
<evidence type="ECO:0000250" key="4">
    <source>
        <dbReference type="UniProtKB" id="P68033"/>
    </source>
</evidence>
<evidence type="ECO:0000250" key="5">
    <source>
        <dbReference type="UniProtKB" id="P68135"/>
    </source>
</evidence>
<evidence type="ECO:0000250" key="6">
    <source>
        <dbReference type="UniProtKB" id="P68137"/>
    </source>
</evidence>
<evidence type="ECO:0000305" key="7"/>
<feature type="initiator methionine" description="Removed">
    <location>
        <position position="1"/>
    </location>
</feature>
<feature type="chain" id="PRO_0000443013" description="Actin, cytoplasmic, intermediate form" evidence="1">
    <location>
        <begin position="2"/>
        <end position="376"/>
    </location>
</feature>
<feature type="chain" id="PRO_0000000685" description="Actin, cytoplasmic" evidence="5">
    <location>
        <begin position="3"/>
        <end position="376"/>
    </location>
</feature>
<feature type="modified residue" description="N-acetylcysteine; in intermediate form" evidence="1">
    <location>
        <position position="2"/>
    </location>
</feature>
<feature type="modified residue" description="N-acetylaspartate; in Actin, cytoplasmic" evidence="5">
    <location>
        <position position="3"/>
    </location>
</feature>
<feature type="modified residue" description="Methionine (R)-sulfoxide" evidence="4">
    <location>
        <position position="45"/>
    </location>
</feature>
<feature type="modified residue" description="Methionine (R)-sulfoxide" evidence="4">
    <location>
        <position position="48"/>
    </location>
</feature>
<feature type="modified residue" description="Tele-methylhistidine" evidence="2">
    <location>
        <position position="74"/>
    </location>
</feature>
<feature type="modified residue" description="N6-methyllysine" evidence="3">
    <location>
        <position position="85"/>
    </location>
</feature>
<reference key="1">
    <citation type="journal article" date="2002" name="J. Molluscan Stud.">
        <title>Comparative study of cytoplasmic actin DNA from six species of Planorbidae (Gastropoda: Basommatophora).</title>
        <authorList>
            <person name="Adema C.M."/>
        </authorList>
    </citation>
    <scope>NUCLEOTIDE SEQUENCE [GENOMIC DNA]</scope>
</reference>
<sequence>MCDEDVAALVVDNGSGMCKAGFAGDDAPRAVFPSIVGRPRHQGVMVGMGQKDSYVGDEAQSKRGILTLKYPIEHGIVTNWDDMEKIWHHTFYNELRVAPEEHPVLLTEAPLNPKANREKMTQIMFETFNTPAMYVAIQAVLSLYASGRTTGIVIDSGDGVTHTVPIYEGYALPHAIMRLDLAGRDLTDYLMKILTERGYSFTTTAEREIVRDIKEKLCYVALDFEQEMQTASTSSSLEKSYELPDGQVITIGNERFRCPEAMYQPSFLGMESAGIHETTYNSIMKCDVDIRKDLYANTVLSGGSTMFPGIADRMQKEITALAPPTMKIKIIAPPERKYSVWIGGSILASLSTFQQMWISKQEYDESGPSIVHRKCF</sequence>